<keyword id="KW-0963">Cytoplasm</keyword>
<keyword id="KW-0210">Decarboxylase</keyword>
<keyword id="KW-0456">Lyase</keyword>
<keyword id="KW-0627">Porphyrin biosynthesis</keyword>
<evidence type="ECO:0000255" key="1">
    <source>
        <dbReference type="HAMAP-Rule" id="MF_00218"/>
    </source>
</evidence>
<protein>
    <recommendedName>
        <fullName evidence="1">Uroporphyrinogen decarboxylase</fullName>
        <shortName evidence="1">UPD</shortName>
        <shortName evidence="1">URO-D</shortName>
        <ecNumber evidence="1">4.1.1.37</ecNumber>
    </recommendedName>
</protein>
<dbReference type="EC" id="4.1.1.37" evidence="1"/>
<dbReference type="EMBL" id="AP008957">
    <property type="protein sequence ID" value="BAH33555.1"/>
    <property type="molecule type" value="Genomic_DNA"/>
</dbReference>
<dbReference type="SMR" id="C0ZYX0"/>
<dbReference type="KEGG" id="rer:RER_28470"/>
<dbReference type="eggNOG" id="COG0407">
    <property type="taxonomic scope" value="Bacteria"/>
</dbReference>
<dbReference type="HOGENOM" id="CLU_040933_0_1_11"/>
<dbReference type="UniPathway" id="UPA00251">
    <property type="reaction ID" value="UER00321"/>
</dbReference>
<dbReference type="Proteomes" id="UP000002204">
    <property type="component" value="Chromosome"/>
</dbReference>
<dbReference type="GO" id="GO:0005829">
    <property type="term" value="C:cytosol"/>
    <property type="evidence" value="ECO:0007669"/>
    <property type="project" value="TreeGrafter"/>
</dbReference>
<dbReference type="GO" id="GO:0004853">
    <property type="term" value="F:uroporphyrinogen decarboxylase activity"/>
    <property type="evidence" value="ECO:0007669"/>
    <property type="project" value="UniProtKB-UniRule"/>
</dbReference>
<dbReference type="GO" id="GO:0006782">
    <property type="term" value="P:protoporphyrinogen IX biosynthetic process"/>
    <property type="evidence" value="ECO:0007669"/>
    <property type="project" value="UniProtKB-UniRule"/>
</dbReference>
<dbReference type="CDD" id="cd00717">
    <property type="entry name" value="URO-D"/>
    <property type="match status" value="1"/>
</dbReference>
<dbReference type="FunFam" id="3.20.20.210:FF:000008">
    <property type="entry name" value="Uroporphyrinogen decarboxylase"/>
    <property type="match status" value="1"/>
</dbReference>
<dbReference type="Gene3D" id="3.20.20.210">
    <property type="match status" value="1"/>
</dbReference>
<dbReference type="HAMAP" id="MF_00218">
    <property type="entry name" value="URO_D"/>
    <property type="match status" value="1"/>
</dbReference>
<dbReference type="InterPro" id="IPR038071">
    <property type="entry name" value="UROD/MetE-like_sf"/>
</dbReference>
<dbReference type="InterPro" id="IPR006361">
    <property type="entry name" value="Uroporphyrinogen_deCO2ase_HemE"/>
</dbReference>
<dbReference type="InterPro" id="IPR000257">
    <property type="entry name" value="Uroporphyrinogen_deCOase"/>
</dbReference>
<dbReference type="NCBIfam" id="TIGR01464">
    <property type="entry name" value="hemE"/>
    <property type="match status" value="1"/>
</dbReference>
<dbReference type="PANTHER" id="PTHR21091">
    <property type="entry name" value="METHYLTETRAHYDROFOLATE:HOMOCYSTEINE METHYLTRANSFERASE RELATED"/>
    <property type="match status" value="1"/>
</dbReference>
<dbReference type="PANTHER" id="PTHR21091:SF169">
    <property type="entry name" value="UROPORPHYRINOGEN DECARBOXYLASE"/>
    <property type="match status" value="1"/>
</dbReference>
<dbReference type="Pfam" id="PF01208">
    <property type="entry name" value="URO-D"/>
    <property type="match status" value="1"/>
</dbReference>
<dbReference type="SUPFAM" id="SSF51726">
    <property type="entry name" value="UROD/MetE-like"/>
    <property type="match status" value="1"/>
</dbReference>
<dbReference type="PROSITE" id="PS00906">
    <property type="entry name" value="UROD_1"/>
    <property type="match status" value="1"/>
</dbReference>
<dbReference type="PROSITE" id="PS00907">
    <property type="entry name" value="UROD_2"/>
    <property type="match status" value="1"/>
</dbReference>
<accession>C0ZYX0</accession>
<reference key="1">
    <citation type="submission" date="2005-03" db="EMBL/GenBank/DDBJ databases">
        <title>Comparison of the complete genome sequences of Rhodococcus erythropolis PR4 and Rhodococcus opacus B4.</title>
        <authorList>
            <person name="Takarada H."/>
            <person name="Sekine M."/>
            <person name="Hosoyama A."/>
            <person name="Yamada R."/>
            <person name="Fujisawa T."/>
            <person name="Omata S."/>
            <person name="Shimizu A."/>
            <person name="Tsukatani N."/>
            <person name="Tanikawa S."/>
            <person name="Fujita N."/>
            <person name="Harayama S."/>
        </authorList>
    </citation>
    <scope>NUCLEOTIDE SEQUENCE [LARGE SCALE GENOMIC DNA]</scope>
    <source>
        <strain>PR4 / NBRC 100887</strain>
    </source>
</reference>
<gene>
    <name evidence="1" type="primary">hemE</name>
    <name type="ordered locus">RER_28470</name>
</gene>
<feature type="chain" id="PRO_1000204238" description="Uroporphyrinogen decarboxylase">
    <location>
        <begin position="1"/>
        <end position="355"/>
    </location>
</feature>
<feature type="binding site" evidence="1">
    <location>
        <begin position="36"/>
        <end position="40"/>
    </location>
    <ligand>
        <name>substrate</name>
    </ligand>
</feature>
<feature type="binding site" evidence="1">
    <location>
        <position position="85"/>
    </location>
    <ligand>
        <name>substrate</name>
    </ligand>
</feature>
<feature type="binding site" evidence="1">
    <location>
        <position position="160"/>
    </location>
    <ligand>
        <name>substrate</name>
    </ligand>
</feature>
<feature type="binding site" evidence="1">
    <location>
        <position position="215"/>
    </location>
    <ligand>
        <name>substrate</name>
    </ligand>
</feature>
<feature type="binding site" evidence="1">
    <location>
        <position position="334"/>
    </location>
    <ligand>
        <name>substrate</name>
    </ligand>
</feature>
<feature type="site" description="Transition state stabilizer" evidence="1">
    <location>
        <position position="85"/>
    </location>
</feature>
<organism>
    <name type="scientific">Rhodococcus erythropolis (strain PR4 / NBRC 100887)</name>
    <dbReference type="NCBI Taxonomy" id="234621"/>
    <lineage>
        <taxon>Bacteria</taxon>
        <taxon>Bacillati</taxon>
        <taxon>Actinomycetota</taxon>
        <taxon>Actinomycetes</taxon>
        <taxon>Mycobacteriales</taxon>
        <taxon>Nocardiaceae</taxon>
        <taxon>Rhodococcus</taxon>
        <taxon>Rhodococcus erythropolis group</taxon>
    </lineage>
</organism>
<comment type="function">
    <text evidence="1">Catalyzes the decarboxylation of four acetate groups of uroporphyrinogen-III to yield coproporphyrinogen-III.</text>
</comment>
<comment type="catalytic activity">
    <reaction evidence="1">
        <text>uroporphyrinogen III + 4 H(+) = coproporphyrinogen III + 4 CO2</text>
        <dbReference type="Rhea" id="RHEA:19865"/>
        <dbReference type="ChEBI" id="CHEBI:15378"/>
        <dbReference type="ChEBI" id="CHEBI:16526"/>
        <dbReference type="ChEBI" id="CHEBI:57308"/>
        <dbReference type="ChEBI" id="CHEBI:57309"/>
        <dbReference type="EC" id="4.1.1.37"/>
    </reaction>
</comment>
<comment type="pathway">
    <text evidence="1">Porphyrin-containing compound metabolism; protoporphyrin-IX biosynthesis; coproporphyrinogen-III from 5-aminolevulinate: step 4/4.</text>
</comment>
<comment type="subunit">
    <text evidence="1">Homodimer.</text>
</comment>
<comment type="subcellular location">
    <subcellularLocation>
        <location evidence="1">Cytoplasm</location>
    </subcellularLocation>
</comment>
<comment type="similarity">
    <text evidence="1">Belongs to the uroporphyrinogen decarboxylase family.</text>
</comment>
<sequence length="355" mass="37355">MTGSAEYSARRVLPDAPLLAAATGRTPSRRPVWFMRQAGRSLPEYREIRAGIGMLESCFDPALVCEITMQPVRRHDVDAAILFSDIVVPLKAAGIDLDIVAGVGPVVANPIRSIADVAALPRLVPEEVGAIAQAVRLLTTELGSTPLIGFAGAPFTLASYLVEGGPSRNHEKTKALMHSDPKTWHALLGSLADTTICFLQTQLKAGVDAVQLFDSWAGALSLADYREFVLPHSERVFAEVAAAGVPRIHFGVGTGELLGAMGEAGADVVGVDWRIPLDVAAGRVGPGKALQGNLDPAVLFAGPEVIDREVRRIAAEGDRAIEAGAIGHIFNLGHGVLPDTDPTAITSAVELVHSL</sequence>
<name>DCUP_RHOE4</name>
<proteinExistence type="inferred from homology"/>